<gene>
    <name evidence="1" type="primary">groES</name>
    <name evidence="1" type="synonym">groS</name>
    <name type="ordered locus">SaurJH1_2104</name>
</gene>
<organism>
    <name type="scientific">Staphylococcus aureus (strain JH1)</name>
    <dbReference type="NCBI Taxonomy" id="359787"/>
    <lineage>
        <taxon>Bacteria</taxon>
        <taxon>Bacillati</taxon>
        <taxon>Bacillota</taxon>
        <taxon>Bacilli</taxon>
        <taxon>Bacillales</taxon>
        <taxon>Staphylococcaceae</taxon>
        <taxon>Staphylococcus</taxon>
    </lineage>
</organism>
<keyword id="KW-0143">Chaperone</keyword>
<keyword id="KW-0963">Cytoplasm</keyword>
<dbReference type="EMBL" id="CP000736">
    <property type="protein sequence ID" value="ABR52934.1"/>
    <property type="molecule type" value="Genomic_DNA"/>
</dbReference>
<dbReference type="SMR" id="A6U3B6"/>
<dbReference type="KEGG" id="sah:SaurJH1_2104"/>
<dbReference type="HOGENOM" id="CLU_132825_2_1_9"/>
<dbReference type="GO" id="GO:0005737">
    <property type="term" value="C:cytoplasm"/>
    <property type="evidence" value="ECO:0007669"/>
    <property type="project" value="UniProtKB-SubCell"/>
</dbReference>
<dbReference type="GO" id="GO:0005524">
    <property type="term" value="F:ATP binding"/>
    <property type="evidence" value="ECO:0007669"/>
    <property type="project" value="InterPro"/>
</dbReference>
<dbReference type="GO" id="GO:0046872">
    <property type="term" value="F:metal ion binding"/>
    <property type="evidence" value="ECO:0007669"/>
    <property type="project" value="TreeGrafter"/>
</dbReference>
<dbReference type="GO" id="GO:0044183">
    <property type="term" value="F:protein folding chaperone"/>
    <property type="evidence" value="ECO:0007669"/>
    <property type="project" value="InterPro"/>
</dbReference>
<dbReference type="GO" id="GO:0051087">
    <property type="term" value="F:protein-folding chaperone binding"/>
    <property type="evidence" value="ECO:0007669"/>
    <property type="project" value="TreeGrafter"/>
</dbReference>
<dbReference type="GO" id="GO:0051082">
    <property type="term" value="F:unfolded protein binding"/>
    <property type="evidence" value="ECO:0007669"/>
    <property type="project" value="TreeGrafter"/>
</dbReference>
<dbReference type="GO" id="GO:0051085">
    <property type="term" value="P:chaperone cofactor-dependent protein refolding"/>
    <property type="evidence" value="ECO:0007669"/>
    <property type="project" value="TreeGrafter"/>
</dbReference>
<dbReference type="CDD" id="cd00320">
    <property type="entry name" value="cpn10"/>
    <property type="match status" value="1"/>
</dbReference>
<dbReference type="FunFam" id="2.30.33.40:FF:000001">
    <property type="entry name" value="10 kDa chaperonin"/>
    <property type="match status" value="1"/>
</dbReference>
<dbReference type="Gene3D" id="2.30.33.40">
    <property type="entry name" value="GroES chaperonin"/>
    <property type="match status" value="1"/>
</dbReference>
<dbReference type="HAMAP" id="MF_00580">
    <property type="entry name" value="CH10"/>
    <property type="match status" value="1"/>
</dbReference>
<dbReference type="InterPro" id="IPR020818">
    <property type="entry name" value="Chaperonin_GroES"/>
</dbReference>
<dbReference type="InterPro" id="IPR037124">
    <property type="entry name" value="Chaperonin_GroES_sf"/>
</dbReference>
<dbReference type="InterPro" id="IPR018369">
    <property type="entry name" value="Chaprnonin_Cpn10_CS"/>
</dbReference>
<dbReference type="InterPro" id="IPR011032">
    <property type="entry name" value="GroES-like_sf"/>
</dbReference>
<dbReference type="NCBIfam" id="NF001531">
    <property type="entry name" value="PRK00364.2-2"/>
    <property type="match status" value="1"/>
</dbReference>
<dbReference type="NCBIfam" id="NF001532">
    <property type="entry name" value="PRK00364.2-3"/>
    <property type="match status" value="1"/>
</dbReference>
<dbReference type="NCBIfam" id="NF001533">
    <property type="entry name" value="PRK00364.2-4"/>
    <property type="match status" value="1"/>
</dbReference>
<dbReference type="NCBIfam" id="NF001534">
    <property type="entry name" value="PRK00364.2-5"/>
    <property type="match status" value="1"/>
</dbReference>
<dbReference type="PANTHER" id="PTHR10772">
    <property type="entry name" value="10 KDA HEAT SHOCK PROTEIN"/>
    <property type="match status" value="1"/>
</dbReference>
<dbReference type="PANTHER" id="PTHR10772:SF58">
    <property type="entry name" value="CO-CHAPERONIN GROES"/>
    <property type="match status" value="1"/>
</dbReference>
<dbReference type="Pfam" id="PF00166">
    <property type="entry name" value="Cpn10"/>
    <property type="match status" value="1"/>
</dbReference>
<dbReference type="PRINTS" id="PR00297">
    <property type="entry name" value="CHAPERONIN10"/>
</dbReference>
<dbReference type="SMART" id="SM00883">
    <property type="entry name" value="Cpn10"/>
    <property type="match status" value="1"/>
</dbReference>
<dbReference type="SUPFAM" id="SSF50129">
    <property type="entry name" value="GroES-like"/>
    <property type="match status" value="1"/>
</dbReference>
<dbReference type="PROSITE" id="PS00681">
    <property type="entry name" value="CHAPERONINS_CPN10"/>
    <property type="match status" value="1"/>
</dbReference>
<proteinExistence type="inferred from homology"/>
<reference key="1">
    <citation type="submission" date="2007-06" db="EMBL/GenBank/DDBJ databases">
        <title>Complete sequence of chromosome of Staphylococcus aureus subsp. aureus JH1.</title>
        <authorList>
            <consortium name="US DOE Joint Genome Institute"/>
            <person name="Copeland A."/>
            <person name="Lucas S."/>
            <person name="Lapidus A."/>
            <person name="Barry K."/>
            <person name="Detter J.C."/>
            <person name="Glavina del Rio T."/>
            <person name="Hammon N."/>
            <person name="Israni S."/>
            <person name="Dalin E."/>
            <person name="Tice H."/>
            <person name="Pitluck S."/>
            <person name="Chain P."/>
            <person name="Malfatti S."/>
            <person name="Shin M."/>
            <person name="Vergez L."/>
            <person name="Schmutz J."/>
            <person name="Larimer F."/>
            <person name="Land M."/>
            <person name="Hauser L."/>
            <person name="Kyrpides N."/>
            <person name="Ivanova N."/>
            <person name="Tomasz A."/>
            <person name="Richardson P."/>
        </authorList>
    </citation>
    <scope>NUCLEOTIDE SEQUENCE [LARGE SCALE GENOMIC DNA]</scope>
    <source>
        <strain>JH1</strain>
    </source>
</reference>
<evidence type="ECO:0000255" key="1">
    <source>
        <dbReference type="HAMAP-Rule" id="MF_00580"/>
    </source>
</evidence>
<comment type="function">
    <text evidence="1">Together with the chaperonin GroEL, plays an essential role in assisting protein folding. The GroEL-GroES system forms a nano-cage that allows encapsulation of the non-native substrate proteins and provides a physical environment optimized to promote and accelerate protein folding. GroES binds to the apical surface of the GroEL ring, thereby capping the opening of the GroEL channel.</text>
</comment>
<comment type="subunit">
    <text evidence="1">Heptamer of 7 subunits arranged in a ring. Interacts with the chaperonin GroEL.</text>
</comment>
<comment type="subcellular location">
    <subcellularLocation>
        <location evidence="1">Cytoplasm</location>
    </subcellularLocation>
</comment>
<comment type="similarity">
    <text evidence="1">Belongs to the GroES chaperonin family.</text>
</comment>
<feature type="chain" id="PRO_1000082396" description="Co-chaperonin GroES">
    <location>
        <begin position="1"/>
        <end position="94"/>
    </location>
</feature>
<sequence>MLKPIGNRVIIEKKEQEQTTKSGIVLTDSAKEKSNEGVIVAVGTGRLLNDGTRVTPEVKEGDRVVFQQYAGTEVKRDNETYLVLNEEDILAVIE</sequence>
<name>CH10_STAA2</name>
<protein>
    <recommendedName>
        <fullName evidence="1">Co-chaperonin GroES</fullName>
    </recommendedName>
    <alternativeName>
        <fullName evidence="1">10 kDa chaperonin</fullName>
    </alternativeName>
    <alternativeName>
        <fullName evidence="1">Chaperonin-10</fullName>
        <shortName evidence="1">Cpn10</shortName>
    </alternativeName>
</protein>
<accession>A6U3B6</accession>